<dbReference type="EC" id="3.1.-.-" evidence="1"/>
<dbReference type="EC" id="5.6.2.4" evidence="1"/>
<dbReference type="EMBL" id="CP000411">
    <property type="protein sequence ID" value="ABJ56285.1"/>
    <property type="molecule type" value="Genomic_DNA"/>
</dbReference>
<dbReference type="RefSeq" id="WP_011677413.1">
    <property type="nucleotide sequence ID" value="NC_008528.1"/>
</dbReference>
<dbReference type="SMR" id="Q04GY7"/>
<dbReference type="STRING" id="203123.OEOE_0309"/>
<dbReference type="DNASU" id="4416235"/>
<dbReference type="KEGG" id="ooe:OEOE_0309"/>
<dbReference type="PATRIC" id="fig|203123.7.peg.321"/>
<dbReference type="eggNOG" id="COG1074">
    <property type="taxonomic scope" value="Bacteria"/>
</dbReference>
<dbReference type="HOGENOM" id="CLU_001114_3_1_9"/>
<dbReference type="Proteomes" id="UP000000774">
    <property type="component" value="Chromosome"/>
</dbReference>
<dbReference type="GO" id="GO:0005829">
    <property type="term" value="C:cytosol"/>
    <property type="evidence" value="ECO:0007669"/>
    <property type="project" value="TreeGrafter"/>
</dbReference>
<dbReference type="GO" id="GO:0033202">
    <property type="term" value="C:DNA helicase complex"/>
    <property type="evidence" value="ECO:0007669"/>
    <property type="project" value="TreeGrafter"/>
</dbReference>
<dbReference type="GO" id="GO:0043138">
    <property type="term" value="F:3'-5' DNA helicase activity"/>
    <property type="evidence" value="ECO:0007669"/>
    <property type="project" value="UniProtKB-UniRule"/>
</dbReference>
<dbReference type="GO" id="GO:0008408">
    <property type="term" value="F:3'-5' exonuclease activity"/>
    <property type="evidence" value="ECO:0007669"/>
    <property type="project" value="UniProtKB-UniRule"/>
</dbReference>
<dbReference type="GO" id="GO:0005524">
    <property type="term" value="F:ATP binding"/>
    <property type="evidence" value="ECO:0007669"/>
    <property type="project" value="UniProtKB-UniRule"/>
</dbReference>
<dbReference type="GO" id="GO:0016887">
    <property type="term" value="F:ATP hydrolysis activity"/>
    <property type="evidence" value="ECO:0007669"/>
    <property type="project" value="RHEA"/>
</dbReference>
<dbReference type="GO" id="GO:0003690">
    <property type="term" value="F:double-stranded DNA binding"/>
    <property type="evidence" value="ECO:0007669"/>
    <property type="project" value="UniProtKB-UniRule"/>
</dbReference>
<dbReference type="GO" id="GO:0000724">
    <property type="term" value="P:double-strand break repair via homologous recombination"/>
    <property type="evidence" value="ECO:0007669"/>
    <property type="project" value="UniProtKB-UniRule"/>
</dbReference>
<dbReference type="CDD" id="cd17932">
    <property type="entry name" value="DEXQc_UvrD"/>
    <property type="match status" value="1"/>
</dbReference>
<dbReference type="Gene3D" id="3.90.320.10">
    <property type="match status" value="1"/>
</dbReference>
<dbReference type="Gene3D" id="3.40.50.300">
    <property type="entry name" value="P-loop containing nucleotide triphosphate hydrolases"/>
    <property type="match status" value="4"/>
</dbReference>
<dbReference type="Gene3D" id="1.10.486.10">
    <property type="entry name" value="PCRA, domain 4"/>
    <property type="match status" value="1"/>
</dbReference>
<dbReference type="HAMAP" id="MF_01451">
    <property type="entry name" value="AddA"/>
    <property type="match status" value="1"/>
</dbReference>
<dbReference type="InterPro" id="IPR014152">
    <property type="entry name" value="AddA"/>
</dbReference>
<dbReference type="InterPro" id="IPR014017">
    <property type="entry name" value="DNA_helicase_UvrD-like_C"/>
</dbReference>
<dbReference type="InterPro" id="IPR000212">
    <property type="entry name" value="DNA_helicase_UvrD/REP"/>
</dbReference>
<dbReference type="InterPro" id="IPR027417">
    <property type="entry name" value="P-loop_NTPase"/>
</dbReference>
<dbReference type="InterPro" id="IPR011604">
    <property type="entry name" value="PDDEXK-like_dom_sf"/>
</dbReference>
<dbReference type="InterPro" id="IPR038726">
    <property type="entry name" value="PDDEXK_AddAB-type"/>
</dbReference>
<dbReference type="InterPro" id="IPR011335">
    <property type="entry name" value="Restrct_endonuc-II-like"/>
</dbReference>
<dbReference type="InterPro" id="IPR014016">
    <property type="entry name" value="UvrD-like_ATP-bd"/>
</dbReference>
<dbReference type="NCBIfam" id="TIGR02785">
    <property type="entry name" value="addA_Gpos"/>
    <property type="match status" value="1"/>
</dbReference>
<dbReference type="PANTHER" id="PTHR11070:SF48">
    <property type="entry name" value="ATP-DEPENDENT HELICASE_NUCLEASE SUBUNIT A"/>
    <property type="match status" value="1"/>
</dbReference>
<dbReference type="PANTHER" id="PTHR11070">
    <property type="entry name" value="UVRD / RECB / PCRA DNA HELICASE FAMILY MEMBER"/>
    <property type="match status" value="1"/>
</dbReference>
<dbReference type="Pfam" id="PF12705">
    <property type="entry name" value="PDDEXK_1"/>
    <property type="match status" value="1"/>
</dbReference>
<dbReference type="Pfam" id="PF00580">
    <property type="entry name" value="UvrD-helicase"/>
    <property type="match status" value="1"/>
</dbReference>
<dbReference type="Pfam" id="PF13361">
    <property type="entry name" value="UvrD_C"/>
    <property type="match status" value="1"/>
</dbReference>
<dbReference type="SUPFAM" id="SSF52540">
    <property type="entry name" value="P-loop containing nucleoside triphosphate hydrolases"/>
    <property type="match status" value="1"/>
</dbReference>
<dbReference type="SUPFAM" id="SSF52980">
    <property type="entry name" value="Restriction endonuclease-like"/>
    <property type="match status" value="1"/>
</dbReference>
<dbReference type="PROSITE" id="PS51198">
    <property type="entry name" value="UVRD_HELICASE_ATP_BIND"/>
    <property type="match status" value="1"/>
</dbReference>
<dbReference type="PROSITE" id="PS51217">
    <property type="entry name" value="UVRD_HELICASE_CTER"/>
    <property type="match status" value="1"/>
</dbReference>
<proteinExistence type="inferred from homology"/>
<comment type="function">
    <text evidence="1">The heterodimer acts as both an ATP-dependent DNA helicase and an ATP-dependent, dual-direction single-stranded exonuclease. Recognizes the chi site generating a DNA molecule suitable for the initiation of homologous recombination. The AddA nuclease domain is required for chi fragment generation; this subunit has the helicase and 3' -&gt; 5' nuclease activities.</text>
</comment>
<comment type="catalytic activity">
    <reaction evidence="1">
        <text>Couples ATP hydrolysis with the unwinding of duplex DNA by translocating in the 3'-5' direction.</text>
        <dbReference type="EC" id="5.6.2.4"/>
    </reaction>
</comment>
<comment type="catalytic activity">
    <reaction evidence="1">
        <text>ATP + H2O = ADP + phosphate + H(+)</text>
        <dbReference type="Rhea" id="RHEA:13065"/>
        <dbReference type="ChEBI" id="CHEBI:15377"/>
        <dbReference type="ChEBI" id="CHEBI:15378"/>
        <dbReference type="ChEBI" id="CHEBI:30616"/>
        <dbReference type="ChEBI" id="CHEBI:43474"/>
        <dbReference type="ChEBI" id="CHEBI:456216"/>
        <dbReference type="EC" id="5.6.2.4"/>
    </reaction>
</comment>
<comment type="cofactor">
    <cofactor evidence="1">
        <name>Mg(2+)</name>
        <dbReference type="ChEBI" id="CHEBI:18420"/>
    </cofactor>
</comment>
<comment type="subunit">
    <text evidence="1">Heterodimer of AddA and AddB/RexB.</text>
</comment>
<comment type="similarity">
    <text evidence="1">Belongs to the helicase family. AddA subfamily.</text>
</comment>
<sequence length="1186" mass="136211">MNFSKNQRAVIAHIPDHNLLVAASAGSGKTTVLIEHVYQQLLSGKSIDRFLISTFTDAAALEMKNRLEKRIRAGITEEEGQLKRHLQEQLLLLNSAAIGTLDSFSLRIIERYYSVIGLDPRYRMLADQTEKNLLVKDVLDDTFDEMYHDEKFLRLLNNFSSASHDQDLKNLVIKLNTMAETRANPDFWLDSIAENYRLSGGLTKGSFWKELLQPQIFNRASAALYQLLSAKKGVEDLEDYHSYIAYLADAVGLVRGFIEVCSQNNWQQMSDYFVNNSWPKSARKSGKNEQEADYFDNWIKPWIKEAKDSYRSIESDFLFLNESQWLDISEKSLGVVEELIRLTKVFRKKFALKKRELSLLDFSDGEQFAYQILQNQTVREEIQSLFDEVLVDEYQDINDLQENILTDVSNGSNFFMVGDLKQSIYGFRQADPVNFSNKYIQYKEGNGGELIELSENYRSQHNVADFTNAVFRKLMDRKLGGIDYRGDVELKAANRDYPKNLKNVADISIFDIDEESNEDEDFNSRQAQIEIIAAKIQALVGQSEIYDRQSGKMRPLVYRDITILERSHSWENDIQTIFKKYHIPINVAAGNFLQEFEVSIVLSFLKIIDNPHQDIPLVAVLRSPIYGLDENQLAEIRTADMKHDYFSALQAYAKTGQDLDLQKKMAAFLVQLENYREIAADNQIVDLIWQIYNDTNWPEYVAGMVGGSQRQANLHALYQYAQQLSDNHFVGLFSFIRYVEQLMDSVEDFAQAPVDMGQEAVSVMTIHAAKGLEFPIVFLLNLDKQIDNRDSNGAMVVDFDNGIGIDFVHPTSQVKIPTIQKIAVAEKIKEKNWAEEMRLLYVALTRAEQRLYLVGSSKRMSDLIHNWGTPVSIGKKVIAFQDRMRAKSYQSWIGMSLANSGYIKLDKVEGNYSKKDLTFKIESYNAQTIPKIVENKAKIKQNEQEETGIDLARSKKILDYNYPYKIESELAAYHNVSELKRVFEDPDSLLMPEMNSDRQPQITELPEPKFIGGNDQEQVSSTDKGTATHLILEKIDWKKEIDKDYLQQLIKENIPDQKTRQSIELDRIIWFANSEFGTEIKKSASTLKREQTFAMLIPAKQIYQQVETSDPVLVHGIIDGYFISDGLITLFDYKTDRFGKDYVSKLKERYSGQLNLYAAALSSIYPNLKVERKVVVGLQGKRLIYL</sequence>
<protein>
    <recommendedName>
        <fullName evidence="1">ATP-dependent helicase/nuclease subunit A</fullName>
        <ecNumber evidence="1">3.1.-.-</ecNumber>
        <ecNumber evidence="1">5.6.2.4</ecNumber>
    </recommendedName>
    <alternativeName>
        <fullName evidence="1">ATP-dependent helicase/nuclease AddA</fullName>
    </alternativeName>
    <alternativeName>
        <fullName evidence="1">DNA 3'-5' helicase AddA</fullName>
    </alternativeName>
</protein>
<accession>Q04GY7</accession>
<organism>
    <name type="scientific">Oenococcus oeni (strain ATCC BAA-331 / PSU-1)</name>
    <dbReference type="NCBI Taxonomy" id="203123"/>
    <lineage>
        <taxon>Bacteria</taxon>
        <taxon>Bacillati</taxon>
        <taxon>Bacillota</taxon>
        <taxon>Bacilli</taxon>
        <taxon>Lactobacillales</taxon>
        <taxon>Lactobacillaceae</taxon>
        <taxon>Oenococcus</taxon>
    </lineage>
</organism>
<gene>
    <name evidence="1" type="primary">addA</name>
    <name type="ordered locus">OEOE_0309</name>
</gene>
<keyword id="KW-0067">ATP-binding</keyword>
<keyword id="KW-0227">DNA damage</keyword>
<keyword id="KW-0234">DNA repair</keyword>
<keyword id="KW-0238">DNA-binding</keyword>
<keyword id="KW-0269">Exonuclease</keyword>
<keyword id="KW-0347">Helicase</keyword>
<keyword id="KW-0378">Hydrolase</keyword>
<keyword id="KW-0413">Isomerase</keyword>
<keyword id="KW-0540">Nuclease</keyword>
<keyword id="KW-0547">Nucleotide-binding</keyword>
<keyword id="KW-1185">Reference proteome</keyword>
<reference key="1">
    <citation type="journal article" date="2006" name="Proc. Natl. Acad. Sci. U.S.A.">
        <title>Comparative genomics of the lactic acid bacteria.</title>
        <authorList>
            <person name="Makarova K.S."/>
            <person name="Slesarev A."/>
            <person name="Wolf Y.I."/>
            <person name="Sorokin A."/>
            <person name="Mirkin B."/>
            <person name="Koonin E.V."/>
            <person name="Pavlov A."/>
            <person name="Pavlova N."/>
            <person name="Karamychev V."/>
            <person name="Polouchine N."/>
            <person name="Shakhova V."/>
            <person name="Grigoriev I."/>
            <person name="Lou Y."/>
            <person name="Rohksar D."/>
            <person name="Lucas S."/>
            <person name="Huang K."/>
            <person name="Goodstein D.M."/>
            <person name="Hawkins T."/>
            <person name="Plengvidhya V."/>
            <person name="Welker D."/>
            <person name="Hughes J."/>
            <person name="Goh Y."/>
            <person name="Benson A."/>
            <person name="Baldwin K."/>
            <person name="Lee J.-H."/>
            <person name="Diaz-Muniz I."/>
            <person name="Dosti B."/>
            <person name="Smeianov V."/>
            <person name="Wechter W."/>
            <person name="Barabote R."/>
            <person name="Lorca G."/>
            <person name="Altermann E."/>
            <person name="Barrangou R."/>
            <person name="Ganesan B."/>
            <person name="Xie Y."/>
            <person name="Rawsthorne H."/>
            <person name="Tamir D."/>
            <person name="Parker C."/>
            <person name="Breidt F."/>
            <person name="Broadbent J.R."/>
            <person name="Hutkins R."/>
            <person name="O'Sullivan D."/>
            <person name="Steele J."/>
            <person name="Unlu G."/>
            <person name="Saier M.H. Jr."/>
            <person name="Klaenhammer T."/>
            <person name="Richardson P."/>
            <person name="Kozyavkin S."/>
            <person name="Weimer B.C."/>
            <person name="Mills D.A."/>
        </authorList>
    </citation>
    <scope>NUCLEOTIDE SEQUENCE [LARGE SCALE GENOMIC DNA]</scope>
    <source>
        <strain>ATCC BAA-331 / PSU-1</strain>
    </source>
</reference>
<name>ADDA_OENOB</name>
<evidence type="ECO:0000255" key="1">
    <source>
        <dbReference type="HAMAP-Rule" id="MF_01451"/>
    </source>
</evidence>
<feature type="chain" id="PRO_0000379304" description="ATP-dependent helicase/nuclease subunit A">
    <location>
        <begin position="1"/>
        <end position="1186"/>
    </location>
</feature>
<feature type="domain" description="UvrD-like helicase ATP-binding" evidence="1">
    <location>
        <begin position="2"/>
        <end position="460"/>
    </location>
</feature>
<feature type="domain" description="UvrD-like helicase C-terminal" evidence="1">
    <location>
        <begin position="487"/>
        <end position="771"/>
    </location>
</feature>
<feature type="binding site" evidence="1">
    <location>
        <begin position="23"/>
        <end position="30"/>
    </location>
    <ligand>
        <name>ATP</name>
        <dbReference type="ChEBI" id="CHEBI:30616"/>
    </ligand>
</feature>